<reference key="1">
    <citation type="journal article" date="2007" name="PLoS ONE">
        <title>Complete genomic characterization of a pathogenic A.II strain of Francisella tularensis subspecies tularensis.</title>
        <authorList>
            <person name="Beckstrom-Sternberg S.M."/>
            <person name="Auerbach R.K."/>
            <person name="Godbole S."/>
            <person name="Pearson J.V."/>
            <person name="Beckstrom-Sternberg J.S."/>
            <person name="Deng Z."/>
            <person name="Munk C."/>
            <person name="Kubota K."/>
            <person name="Zhou Y."/>
            <person name="Bruce D."/>
            <person name="Noronha J."/>
            <person name="Scheuermann R.H."/>
            <person name="Wang A."/>
            <person name="Wei X."/>
            <person name="Wang J."/>
            <person name="Hao J."/>
            <person name="Wagner D.M."/>
            <person name="Brettin T.S."/>
            <person name="Brown N."/>
            <person name="Gilna P."/>
            <person name="Keim P.S."/>
        </authorList>
    </citation>
    <scope>NUCLEOTIDE SEQUENCE [LARGE SCALE GENOMIC DNA]</scope>
    <source>
        <strain>WY96-3418</strain>
    </source>
</reference>
<feature type="chain" id="PRO_0000301896" description="3-hydroxyacyl-[acyl-carrier-protein] dehydratase FabZ">
    <location>
        <begin position="1"/>
        <end position="163"/>
    </location>
</feature>
<feature type="active site" evidence="1">
    <location>
        <position position="58"/>
    </location>
</feature>
<name>FABZ_FRATW</name>
<proteinExistence type="inferred from homology"/>
<comment type="function">
    <text evidence="1">Involved in unsaturated fatty acids biosynthesis. Catalyzes the dehydration of short chain beta-hydroxyacyl-ACPs and long chain saturated and unsaturated beta-hydroxyacyl-ACPs.</text>
</comment>
<comment type="catalytic activity">
    <reaction evidence="1">
        <text>a (3R)-hydroxyacyl-[ACP] = a (2E)-enoyl-[ACP] + H2O</text>
        <dbReference type="Rhea" id="RHEA:13097"/>
        <dbReference type="Rhea" id="RHEA-COMP:9925"/>
        <dbReference type="Rhea" id="RHEA-COMP:9945"/>
        <dbReference type="ChEBI" id="CHEBI:15377"/>
        <dbReference type="ChEBI" id="CHEBI:78784"/>
        <dbReference type="ChEBI" id="CHEBI:78827"/>
        <dbReference type="EC" id="4.2.1.59"/>
    </reaction>
</comment>
<comment type="subcellular location">
    <subcellularLocation>
        <location evidence="1">Cytoplasm</location>
    </subcellularLocation>
</comment>
<comment type="similarity">
    <text evidence="1">Belongs to the thioester dehydratase family. FabZ subfamily.</text>
</comment>
<gene>
    <name evidence="1" type="primary">fabZ</name>
    <name type="ordered locus">FTW_0356</name>
</gene>
<keyword id="KW-0963">Cytoplasm</keyword>
<keyword id="KW-0441">Lipid A biosynthesis</keyword>
<keyword id="KW-0444">Lipid biosynthesis</keyword>
<keyword id="KW-0443">Lipid metabolism</keyword>
<keyword id="KW-0456">Lyase</keyword>
<sequence length="163" mass="18150">MSQFNQNNKQIDVMGIRKILPHRYPFALLDKIVDWSVEDRTIVAQKNVTINEDFFNGHFPDFPVMPGVLIVEAMAQATAILGELMAETLFAHVVEKAGGGRRTFMLAGIDKVRVKRPVVPGDVLVIESRMVKQKNIICTAESVAKVDGQIVCSAELMAAYKDY</sequence>
<evidence type="ECO:0000255" key="1">
    <source>
        <dbReference type="HAMAP-Rule" id="MF_00406"/>
    </source>
</evidence>
<protein>
    <recommendedName>
        <fullName evidence="1">3-hydroxyacyl-[acyl-carrier-protein] dehydratase FabZ</fullName>
        <ecNumber evidence="1">4.2.1.59</ecNumber>
    </recommendedName>
    <alternativeName>
        <fullName evidence="1">(3R)-hydroxymyristoyl-[acyl-carrier-protein] dehydratase</fullName>
        <shortName evidence="1">(3R)-hydroxymyristoyl-ACP dehydrase</shortName>
    </alternativeName>
    <alternativeName>
        <fullName evidence="1">Beta-hydroxyacyl-ACP dehydratase</fullName>
    </alternativeName>
</protein>
<accession>A4IWJ5</accession>
<dbReference type="EC" id="4.2.1.59" evidence="1"/>
<dbReference type="EMBL" id="CP000608">
    <property type="protein sequence ID" value="ABO46297.1"/>
    <property type="molecule type" value="Genomic_DNA"/>
</dbReference>
<dbReference type="RefSeq" id="WP_003014877.1">
    <property type="nucleotide sequence ID" value="NC_009257.1"/>
</dbReference>
<dbReference type="SMR" id="A4IWJ5"/>
<dbReference type="GeneID" id="75264783"/>
<dbReference type="KEGG" id="ftw:FTW_0356"/>
<dbReference type="HOGENOM" id="CLU_078912_1_2_6"/>
<dbReference type="GO" id="GO:0005737">
    <property type="term" value="C:cytoplasm"/>
    <property type="evidence" value="ECO:0007669"/>
    <property type="project" value="UniProtKB-SubCell"/>
</dbReference>
<dbReference type="GO" id="GO:0016020">
    <property type="term" value="C:membrane"/>
    <property type="evidence" value="ECO:0007669"/>
    <property type="project" value="GOC"/>
</dbReference>
<dbReference type="GO" id="GO:0019171">
    <property type="term" value="F:(3R)-hydroxyacyl-[acyl-carrier-protein] dehydratase activity"/>
    <property type="evidence" value="ECO:0007669"/>
    <property type="project" value="UniProtKB-EC"/>
</dbReference>
<dbReference type="GO" id="GO:0006633">
    <property type="term" value="P:fatty acid biosynthetic process"/>
    <property type="evidence" value="ECO:0007669"/>
    <property type="project" value="UniProtKB-UniRule"/>
</dbReference>
<dbReference type="GO" id="GO:0009245">
    <property type="term" value="P:lipid A biosynthetic process"/>
    <property type="evidence" value="ECO:0007669"/>
    <property type="project" value="UniProtKB-UniRule"/>
</dbReference>
<dbReference type="CDD" id="cd01288">
    <property type="entry name" value="FabZ"/>
    <property type="match status" value="1"/>
</dbReference>
<dbReference type="FunFam" id="3.10.129.10:FF:000001">
    <property type="entry name" value="3-hydroxyacyl-[acyl-carrier-protein] dehydratase FabZ"/>
    <property type="match status" value="1"/>
</dbReference>
<dbReference type="Gene3D" id="3.10.129.10">
    <property type="entry name" value="Hotdog Thioesterase"/>
    <property type="match status" value="1"/>
</dbReference>
<dbReference type="HAMAP" id="MF_00406">
    <property type="entry name" value="FabZ"/>
    <property type="match status" value="1"/>
</dbReference>
<dbReference type="InterPro" id="IPR013114">
    <property type="entry name" value="FabA_FabZ"/>
</dbReference>
<dbReference type="InterPro" id="IPR010084">
    <property type="entry name" value="FabZ"/>
</dbReference>
<dbReference type="InterPro" id="IPR029069">
    <property type="entry name" value="HotDog_dom_sf"/>
</dbReference>
<dbReference type="NCBIfam" id="TIGR01750">
    <property type="entry name" value="fabZ"/>
    <property type="match status" value="1"/>
</dbReference>
<dbReference type="NCBIfam" id="NF000582">
    <property type="entry name" value="PRK00006.1"/>
    <property type="match status" value="1"/>
</dbReference>
<dbReference type="PANTHER" id="PTHR30272">
    <property type="entry name" value="3-HYDROXYACYL-[ACYL-CARRIER-PROTEIN] DEHYDRATASE"/>
    <property type="match status" value="1"/>
</dbReference>
<dbReference type="PANTHER" id="PTHR30272:SF1">
    <property type="entry name" value="3-HYDROXYACYL-[ACYL-CARRIER-PROTEIN] DEHYDRATASE"/>
    <property type="match status" value="1"/>
</dbReference>
<dbReference type="Pfam" id="PF07977">
    <property type="entry name" value="FabA"/>
    <property type="match status" value="1"/>
</dbReference>
<dbReference type="SUPFAM" id="SSF54637">
    <property type="entry name" value="Thioesterase/thiol ester dehydrase-isomerase"/>
    <property type="match status" value="1"/>
</dbReference>
<organism>
    <name type="scientific">Francisella tularensis subsp. tularensis (strain WY96-3418)</name>
    <dbReference type="NCBI Taxonomy" id="418136"/>
    <lineage>
        <taxon>Bacteria</taxon>
        <taxon>Pseudomonadati</taxon>
        <taxon>Pseudomonadota</taxon>
        <taxon>Gammaproteobacteria</taxon>
        <taxon>Thiotrichales</taxon>
        <taxon>Francisellaceae</taxon>
        <taxon>Francisella</taxon>
    </lineage>
</organism>